<accession>Q1MPA7</accession>
<proteinExistence type="inferred from homology"/>
<protein>
    <recommendedName>
        <fullName evidence="1">Hydroxylamine reductase</fullName>
        <ecNumber evidence="1">1.7.99.1</ecNumber>
    </recommendedName>
    <alternativeName>
        <fullName evidence="1">Hybrid-cluster protein</fullName>
        <shortName evidence="1">HCP</shortName>
    </alternativeName>
    <alternativeName>
        <fullName evidence="1">Prismane protein</fullName>
    </alternativeName>
</protein>
<keyword id="KW-0004">4Fe-4S</keyword>
<keyword id="KW-0963">Cytoplasm</keyword>
<keyword id="KW-0408">Iron</keyword>
<keyword id="KW-0411">Iron-sulfur</keyword>
<keyword id="KW-0479">Metal-binding</keyword>
<keyword id="KW-0560">Oxidoreductase</keyword>
<keyword id="KW-1185">Reference proteome</keyword>
<gene>
    <name evidence="1" type="primary">hcp</name>
    <name type="ordered locus">LI1116</name>
</gene>
<comment type="function">
    <text evidence="1">Catalyzes the reduction of hydroxylamine to form NH(3) and H(2)O.</text>
</comment>
<comment type="catalytic activity">
    <reaction evidence="1">
        <text>A + NH4(+) + H2O = hydroxylamine + AH2 + H(+)</text>
        <dbReference type="Rhea" id="RHEA:22052"/>
        <dbReference type="ChEBI" id="CHEBI:13193"/>
        <dbReference type="ChEBI" id="CHEBI:15377"/>
        <dbReference type="ChEBI" id="CHEBI:15378"/>
        <dbReference type="ChEBI" id="CHEBI:15429"/>
        <dbReference type="ChEBI" id="CHEBI:17499"/>
        <dbReference type="ChEBI" id="CHEBI:28938"/>
        <dbReference type="EC" id="1.7.99.1"/>
    </reaction>
</comment>
<comment type="cofactor">
    <cofactor evidence="1">
        <name>[4Fe-4S] cluster</name>
        <dbReference type="ChEBI" id="CHEBI:49883"/>
    </cofactor>
    <text evidence="1">Binds 1 [4Fe-4S] cluster.</text>
</comment>
<comment type="cofactor">
    <cofactor evidence="1">
        <name>hybrid [4Fe-2O-2S] cluster</name>
        <dbReference type="ChEBI" id="CHEBI:60519"/>
    </cofactor>
    <text evidence="1">Binds 1 hybrid [4Fe-2O-2S] cluster.</text>
</comment>
<comment type="subcellular location">
    <subcellularLocation>
        <location evidence="1">Cytoplasm</location>
    </subcellularLocation>
</comment>
<comment type="similarity">
    <text evidence="1">Belongs to the HCP family.</text>
</comment>
<feature type="chain" id="PRO_1000009155" description="Hydroxylamine reductase">
    <location>
        <begin position="1"/>
        <end position="537"/>
    </location>
</feature>
<feature type="binding site" evidence="1">
    <location>
        <position position="3"/>
    </location>
    <ligand>
        <name>[4Fe-4S] cluster</name>
        <dbReference type="ChEBI" id="CHEBI:49883"/>
    </ligand>
</feature>
<feature type="binding site" evidence="1">
    <location>
        <position position="6"/>
    </location>
    <ligand>
        <name>[4Fe-4S] cluster</name>
        <dbReference type="ChEBI" id="CHEBI:49883"/>
    </ligand>
</feature>
<feature type="binding site" evidence="1">
    <location>
        <position position="15"/>
    </location>
    <ligand>
        <name>[4Fe-4S] cluster</name>
        <dbReference type="ChEBI" id="CHEBI:49883"/>
    </ligand>
</feature>
<feature type="binding site" evidence="1">
    <location>
        <position position="21"/>
    </location>
    <ligand>
        <name>[4Fe-4S] cluster</name>
        <dbReference type="ChEBI" id="CHEBI:49883"/>
    </ligand>
</feature>
<feature type="binding site" evidence="1">
    <location>
        <position position="239"/>
    </location>
    <ligand>
        <name>hybrid [4Fe-2O-2S] cluster</name>
        <dbReference type="ChEBI" id="CHEBI:60519"/>
    </ligand>
</feature>
<feature type="binding site" evidence="1">
    <location>
        <position position="263"/>
    </location>
    <ligand>
        <name>hybrid [4Fe-2O-2S] cluster</name>
        <dbReference type="ChEBI" id="CHEBI:60519"/>
    </ligand>
</feature>
<feature type="binding site" evidence="1">
    <location>
        <position position="307"/>
    </location>
    <ligand>
        <name>hybrid [4Fe-2O-2S] cluster</name>
        <dbReference type="ChEBI" id="CHEBI:60519"/>
    </ligand>
</feature>
<feature type="binding site" description="via persulfide group" evidence="1">
    <location>
        <position position="393"/>
    </location>
    <ligand>
        <name>hybrid [4Fe-2O-2S] cluster</name>
        <dbReference type="ChEBI" id="CHEBI:60519"/>
    </ligand>
</feature>
<feature type="binding site" evidence="1">
    <location>
        <position position="421"/>
    </location>
    <ligand>
        <name>hybrid [4Fe-2O-2S] cluster</name>
        <dbReference type="ChEBI" id="CHEBI:60519"/>
    </ligand>
</feature>
<feature type="binding site" evidence="1">
    <location>
        <position position="446"/>
    </location>
    <ligand>
        <name>hybrid [4Fe-2O-2S] cluster</name>
        <dbReference type="ChEBI" id="CHEBI:60519"/>
    </ligand>
</feature>
<feature type="binding site" evidence="1">
    <location>
        <position position="480"/>
    </location>
    <ligand>
        <name>hybrid [4Fe-2O-2S] cluster</name>
        <dbReference type="ChEBI" id="CHEBI:60519"/>
    </ligand>
</feature>
<feature type="binding site" evidence="1">
    <location>
        <position position="482"/>
    </location>
    <ligand>
        <name>hybrid [4Fe-2O-2S] cluster</name>
        <dbReference type="ChEBI" id="CHEBI:60519"/>
    </ligand>
</feature>
<feature type="modified residue" description="Cysteine persulfide" evidence="1">
    <location>
        <position position="393"/>
    </location>
</feature>
<reference key="1">
    <citation type="submission" date="2005-11" db="EMBL/GenBank/DDBJ databases">
        <title>The complete genome sequence of Lawsonia intracellularis: the causative agent of proliferative enteropathy.</title>
        <authorList>
            <person name="Kaur K."/>
            <person name="Zhang Q."/>
            <person name="Beckler D."/>
            <person name="Munir S."/>
            <person name="Li L."/>
            <person name="Kinsley K."/>
            <person name="Herron L."/>
            <person name="Peterson A."/>
            <person name="May B."/>
            <person name="Singh S."/>
            <person name="Gebhart C."/>
            <person name="Kapur V."/>
        </authorList>
    </citation>
    <scope>NUCLEOTIDE SEQUENCE [LARGE SCALE GENOMIC DNA]</scope>
    <source>
        <strain>PHE/MN1-00</strain>
    </source>
</reference>
<dbReference type="EC" id="1.7.99.1" evidence="1"/>
<dbReference type="EMBL" id="AM180252">
    <property type="protein sequence ID" value="CAJ55170.1"/>
    <property type="molecule type" value="Genomic_DNA"/>
</dbReference>
<dbReference type="RefSeq" id="WP_011527199.1">
    <property type="nucleotide sequence ID" value="NC_008011.1"/>
</dbReference>
<dbReference type="SMR" id="Q1MPA7"/>
<dbReference type="STRING" id="363253.LI1116"/>
<dbReference type="KEGG" id="lip:LI1116"/>
<dbReference type="eggNOG" id="COG1151">
    <property type="taxonomic scope" value="Bacteria"/>
</dbReference>
<dbReference type="HOGENOM" id="CLU_038344_2_0_7"/>
<dbReference type="OrthoDB" id="9761526at2"/>
<dbReference type="Proteomes" id="UP000002430">
    <property type="component" value="Chromosome"/>
</dbReference>
<dbReference type="GO" id="GO:0005737">
    <property type="term" value="C:cytoplasm"/>
    <property type="evidence" value="ECO:0007669"/>
    <property type="project" value="UniProtKB-SubCell"/>
</dbReference>
<dbReference type="GO" id="GO:0051539">
    <property type="term" value="F:4 iron, 4 sulfur cluster binding"/>
    <property type="evidence" value="ECO:0007669"/>
    <property type="project" value="UniProtKB-KW"/>
</dbReference>
<dbReference type="GO" id="GO:0050418">
    <property type="term" value="F:hydroxylamine reductase activity"/>
    <property type="evidence" value="ECO:0007669"/>
    <property type="project" value="UniProtKB-UniRule"/>
</dbReference>
<dbReference type="GO" id="GO:0046872">
    <property type="term" value="F:metal ion binding"/>
    <property type="evidence" value="ECO:0007669"/>
    <property type="project" value="UniProtKB-KW"/>
</dbReference>
<dbReference type="GO" id="GO:0004601">
    <property type="term" value="F:peroxidase activity"/>
    <property type="evidence" value="ECO:0007669"/>
    <property type="project" value="TreeGrafter"/>
</dbReference>
<dbReference type="GO" id="GO:0042542">
    <property type="term" value="P:response to hydrogen peroxide"/>
    <property type="evidence" value="ECO:0007669"/>
    <property type="project" value="TreeGrafter"/>
</dbReference>
<dbReference type="Gene3D" id="1.20.1270.20">
    <property type="match status" value="2"/>
</dbReference>
<dbReference type="Gene3D" id="3.40.50.2030">
    <property type="match status" value="2"/>
</dbReference>
<dbReference type="HAMAP" id="MF_00069">
    <property type="entry name" value="Hydroxylam_reduct"/>
    <property type="match status" value="1"/>
</dbReference>
<dbReference type="InterPro" id="IPR004137">
    <property type="entry name" value="HCP/CODH"/>
</dbReference>
<dbReference type="InterPro" id="IPR010048">
    <property type="entry name" value="Hydroxylam_reduct"/>
</dbReference>
<dbReference type="InterPro" id="IPR016099">
    <property type="entry name" value="Prismane-like_a/b-sand"/>
</dbReference>
<dbReference type="InterPro" id="IPR011254">
    <property type="entry name" value="Prismane-like_sf"/>
</dbReference>
<dbReference type="InterPro" id="IPR016100">
    <property type="entry name" value="Prismane_a-bundle"/>
</dbReference>
<dbReference type="NCBIfam" id="TIGR01703">
    <property type="entry name" value="hybrid_clust"/>
    <property type="match status" value="1"/>
</dbReference>
<dbReference type="NCBIfam" id="NF003658">
    <property type="entry name" value="PRK05290.1"/>
    <property type="match status" value="1"/>
</dbReference>
<dbReference type="PANTHER" id="PTHR30109">
    <property type="entry name" value="HYDROXYLAMINE REDUCTASE"/>
    <property type="match status" value="1"/>
</dbReference>
<dbReference type="PANTHER" id="PTHR30109:SF0">
    <property type="entry name" value="HYDROXYLAMINE REDUCTASE"/>
    <property type="match status" value="1"/>
</dbReference>
<dbReference type="Pfam" id="PF03063">
    <property type="entry name" value="Prismane"/>
    <property type="match status" value="1"/>
</dbReference>
<dbReference type="PIRSF" id="PIRSF000076">
    <property type="entry name" value="HCP"/>
    <property type="match status" value="1"/>
</dbReference>
<dbReference type="SUPFAM" id="SSF56821">
    <property type="entry name" value="Prismane protein-like"/>
    <property type="match status" value="1"/>
</dbReference>
<evidence type="ECO:0000255" key="1">
    <source>
        <dbReference type="HAMAP-Rule" id="MF_00069"/>
    </source>
</evidence>
<sequence>MKCNQCEQTAANDSCTNIGVCGKTDNVSHLQDVLIYALRRLAHAALSARAKGIIVPEIDFFTVQALFITLTNVNFDPNVIERFIEQAIINRKTFAQLRGCKIDNSTRPIEEVKSMMSMPTGIDDFHKDKNNCSAMQMLLYGLKGTSAYAYHAAVLGKDDPNLYEFIYEGLAAGFPDREGNIDKERTLSDWMDLVLRCGKSNLRAMELLESGNVESFGVPTSTKVSLGQKKGKAILVSGHDLKDLYDLLCQTEGTGINIYTHGEMLPAHGYPKLHAFTHLVGHYGTAWQNQHKEISLFPGPVLFTTNCIQNPKEYIENVFTSGVTGWPGVQHCKDGDYSKLIERAKELPGFSEDVPGKELLTGFGKQSLLDAAPVILDSIKSGVLQHIFLVGGCDGAKPGRNYYSEFVEKAPDNTVVLTLGCGKFRFFDKDLGMIGSLPRLIDMGQCNDAYAALQVVTALAEILDCGVNDLPVSLVLSWYEQKAVSILLTLLAAGVKGIRLGPSLPSFVSEDILQLLVKEWGIAPITTPDKDIALLMQ</sequence>
<organism>
    <name type="scientific">Lawsonia intracellularis (strain PHE/MN1-00)</name>
    <dbReference type="NCBI Taxonomy" id="363253"/>
    <lineage>
        <taxon>Bacteria</taxon>
        <taxon>Pseudomonadati</taxon>
        <taxon>Thermodesulfobacteriota</taxon>
        <taxon>Desulfovibrionia</taxon>
        <taxon>Desulfovibrionales</taxon>
        <taxon>Desulfovibrionaceae</taxon>
        <taxon>Lawsonia</taxon>
    </lineage>
</organism>
<name>HCP_LAWIP</name>